<organism>
    <name type="scientific">Escherichia coli O1:K1 / APEC</name>
    <dbReference type="NCBI Taxonomy" id="405955"/>
    <lineage>
        <taxon>Bacteria</taxon>
        <taxon>Pseudomonadati</taxon>
        <taxon>Pseudomonadota</taxon>
        <taxon>Gammaproteobacteria</taxon>
        <taxon>Enterobacterales</taxon>
        <taxon>Enterobacteriaceae</taxon>
        <taxon>Escherichia</taxon>
    </lineage>
</organism>
<reference key="1">
    <citation type="journal article" date="2007" name="J. Bacteriol.">
        <title>The genome sequence of avian pathogenic Escherichia coli strain O1:K1:H7 shares strong similarities with human extraintestinal pathogenic E. coli genomes.</title>
        <authorList>
            <person name="Johnson T.J."/>
            <person name="Kariyawasam S."/>
            <person name="Wannemuehler Y."/>
            <person name="Mangiamele P."/>
            <person name="Johnson S.J."/>
            <person name="Doetkott C."/>
            <person name="Skyberg J.A."/>
            <person name="Lynne A.M."/>
            <person name="Johnson J.R."/>
            <person name="Nolan L.K."/>
        </authorList>
    </citation>
    <scope>NUCLEOTIDE SEQUENCE [LARGE SCALE GENOMIC DNA]</scope>
</reference>
<name>RS9_ECOK1</name>
<keyword id="KW-1185">Reference proteome</keyword>
<keyword id="KW-0687">Ribonucleoprotein</keyword>
<keyword id="KW-0689">Ribosomal protein</keyword>
<sequence>MAENQYYGTGRRKSSAARVFIKPGNGKIVINQRSLEQYFGRETARMVVRQPLELVDMVEKLDLYITVKGGGISGQAGAIRHGITRALMEYDESLRSELRKAGFVTRDARQVERKKVGLRKARRRPQFSKR</sequence>
<accession>A1AGC3</accession>
<feature type="chain" id="PRO_1000051219" description="Small ribosomal subunit protein uS9">
    <location>
        <begin position="1"/>
        <end position="130"/>
    </location>
</feature>
<proteinExistence type="inferred from homology"/>
<dbReference type="EMBL" id="CP000468">
    <property type="protein sequence ID" value="ABJ02713.1"/>
    <property type="molecule type" value="Genomic_DNA"/>
</dbReference>
<dbReference type="RefSeq" id="WP_000829818.1">
    <property type="nucleotide sequence ID" value="NZ_CADILS010000003.1"/>
</dbReference>
<dbReference type="SMR" id="A1AGC3"/>
<dbReference type="GeneID" id="98390344"/>
<dbReference type="KEGG" id="ecv:APECO1_3214"/>
<dbReference type="HOGENOM" id="CLU_046483_2_1_6"/>
<dbReference type="Proteomes" id="UP000008216">
    <property type="component" value="Chromosome"/>
</dbReference>
<dbReference type="GO" id="GO:0022627">
    <property type="term" value="C:cytosolic small ribosomal subunit"/>
    <property type="evidence" value="ECO:0007669"/>
    <property type="project" value="TreeGrafter"/>
</dbReference>
<dbReference type="GO" id="GO:0003723">
    <property type="term" value="F:RNA binding"/>
    <property type="evidence" value="ECO:0007669"/>
    <property type="project" value="TreeGrafter"/>
</dbReference>
<dbReference type="GO" id="GO:0003735">
    <property type="term" value="F:structural constituent of ribosome"/>
    <property type="evidence" value="ECO:0007669"/>
    <property type="project" value="InterPro"/>
</dbReference>
<dbReference type="GO" id="GO:0006412">
    <property type="term" value="P:translation"/>
    <property type="evidence" value="ECO:0007669"/>
    <property type="project" value="UniProtKB-UniRule"/>
</dbReference>
<dbReference type="FunFam" id="3.30.230.10:FF:000001">
    <property type="entry name" value="30S ribosomal protein S9"/>
    <property type="match status" value="1"/>
</dbReference>
<dbReference type="Gene3D" id="3.30.230.10">
    <property type="match status" value="1"/>
</dbReference>
<dbReference type="HAMAP" id="MF_00532_B">
    <property type="entry name" value="Ribosomal_uS9_B"/>
    <property type="match status" value="1"/>
</dbReference>
<dbReference type="InterPro" id="IPR020568">
    <property type="entry name" value="Ribosomal_Su5_D2-typ_SF"/>
</dbReference>
<dbReference type="InterPro" id="IPR000754">
    <property type="entry name" value="Ribosomal_uS9"/>
</dbReference>
<dbReference type="InterPro" id="IPR023035">
    <property type="entry name" value="Ribosomal_uS9_bac/plastid"/>
</dbReference>
<dbReference type="InterPro" id="IPR020574">
    <property type="entry name" value="Ribosomal_uS9_CS"/>
</dbReference>
<dbReference type="InterPro" id="IPR014721">
    <property type="entry name" value="Ribsml_uS5_D2-typ_fold_subgr"/>
</dbReference>
<dbReference type="NCBIfam" id="NF001099">
    <property type="entry name" value="PRK00132.1"/>
    <property type="match status" value="1"/>
</dbReference>
<dbReference type="PANTHER" id="PTHR21569">
    <property type="entry name" value="RIBOSOMAL PROTEIN S9"/>
    <property type="match status" value="1"/>
</dbReference>
<dbReference type="PANTHER" id="PTHR21569:SF1">
    <property type="entry name" value="SMALL RIBOSOMAL SUBUNIT PROTEIN US9M"/>
    <property type="match status" value="1"/>
</dbReference>
<dbReference type="Pfam" id="PF00380">
    <property type="entry name" value="Ribosomal_S9"/>
    <property type="match status" value="1"/>
</dbReference>
<dbReference type="SUPFAM" id="SSF54211">
    <property type="entry name" value="Ribosomal protein S5 domain 2-like"/>
    <property type="match status" value="1"/>
</dbReference>
<dbReference type="PROSITE" id="PS00360">
    <property type="entry name" value="RIBOSOMAL_S9"/>
    <property type="match status" value="1"/>
</dbReference>
<evidence type="ECO:0000255" key="1">
    <source>
        <dbReference type="HAMAP-Rule" id="MF_00532"/>
    </source>
</evidence>
<evidence type="ECO:0000305" key="2"/>
<comment type="similarity">
    <text evidence="1">Belongs to the universal ribosomal protein uS9 family.</text>
</comment>
<gene>
    <name evidence="1" type="primary">rpsI</name>
    <name type="ordered locus">Ecok1_32190</name>
    <name type="ORF">APECO1_3214</name>
</gene>
<protein>
    <recommendedName>
        <fullName evidence="1">Small ribosomal subunit protein uS9</fullName>
    </recommendedName>
    <alternativeName>
        <fullName evidence="2">30S ribosomal protein S9</fullName>
    </alternativeName>
</protein>